<proteinExistence type="inferred from homology"/>
<reference key="1">
    <citation type="journal article" date="2009" name="Science">
        <title>The dynamics and time scale of ongoing genomic erosion in symbiotic bacteria.</title>
        <authorList>
            <person name="Moran N.A."/>
            <person name="McLaughlin H.J."/>
            <person name="Sorek R."/>
        </authorList>
    </citation>
    <scope>NUCLEOTIDE SEQUENCE [LARGE SCALE GENOMIC DNA]</scope>
    <source>
        <strain>5A</strain>
    </source>
</reference>
<protein>
    <recommendedName>
        <fullName evidence="1">Inner membrane-spanning protein YciB</fullName>
    </recommendedName>
</protein>
<name>YCIB_BUCA5</name>
<gene>
    <name evidence="1" type="primary">yciB</name>
    <name type="ordered locus">BUAP5A_270</name>
</gene>
<evidence type="ECO:0000255" key="1">
    <source>
        <dbReference type="HAMAP-Rule" id="MF_00189"/>
    </source>
</evidence>
<comment type="function">
    <text evidence="1">Plays a role in cell envelope biogenesis, maintenance of cell envelope integrity and membrane homeostasis.</text>
</comment>
<comment type="subcellular location">
    <subcellularLocation>
        <location evidence="1">Cell inner membrane</location>
        <topology evidence="1">Multi-pass membrane protein</topology>
    </subcellularLocation>
</comment>
<comment type="similarity">
    <text evidence="1">Belongs to the YciB family.</text>
</comment>
<dbReference type="EMBL" id="CP001161">
    <property type="protein sequence ID" value="ACL30639.1"/>
    <property type="molecule type" value="Genomic_DNA"/>
</dbReference>
<dbReference type="RefSeq" id="WP_009874229.1">
    <property type="nucleotide sequence ID" value="NC_011833.1"/>
</dbReference>
<dbReference type="SMR" id="B8D968"/>
<dbReference type="KEGG" id="bap:BUAP5A_270"/>
<dbReference type="HOGENOM" id="CLU_089554_2_0_6"/>
<dbReference type="OrthoDB" id="9788219at2"/>
<dbReference type="Proteomes" id="UP000006904">
    <property type="component" value="Chromosome"/>
</dbReference>
<dbReference type="GO" id="GO:0005886">
    <property type="term" value="C:plasma membrane"/>
    <property type="evidence" value="ECO:0007669"/>
    <property type="project" value="UniProtKB-SubCell"/>
</dbReference>
<dbReference type="HAMAP" id="MF_00189">
    <property type="entry name" value="YciB"/>
    <property type="match status" value="1"/>
</dbReference>
<dbReference type="InterPro" id="IPR006008">
    <property type="entry name" value="YciB"/>
</dbReference>
<dbReference type="NCBIfam" id="TIGR00997">
    <property type="entry name" value="ispZ"/>
    <property type="match status" value="1"/>
</dbReference>
<dbReference type="NCBIfam" id="NF001324">
    <property type="entry name" value="PRK00259.1-2"/>
    <property type="match status" value="1"/>
</dbReference>
<dbReference type="PANTHER" id="PTHR36917:SF1">
    <property type="entry name" value="INNER MEMBRANE-SPANNING PROTEIN YCIB"/>
    <property type="match status" value="1"/>
</dbReference>
<dbReference type="PANTHER" id="PTHR36917">
    <property type="entry name" value="INTRACELLULAR SEPTATION PROTEIN A-RELATED"/>
    <property type="match status" value="1"/>
</dbReference>
<dbReference type="Pfam" id="PF04279">
    <property type="entry name" value="IspA"/>
    <property type="match status" value="1"/>
</dbReference>
<organism>
    <name type="scientific">Buchnera aphidicola subsp. Acyrthosiphon pisum (strain 5A)</name>
    <dbReference type="NCBI Taxonomy" id="563178"/>
    <lineage>
        <taxon>Bacteria</taxon>
        <taxon>Pseudomonadati</taxon>
        <taxon>Pseudomonadota</taxon>
        <taxon>Gammaproteobacteria</taxon>
        <taxon>Enterobacterales</taxon>
        <taxon>Erwiniaceae</taxon>
        <taxon>Buchnera</taxon>
    </lineage>
</organism>
<keyword id="KW-0997">Cell inner membrane</keyword>
<keyword id="KW-1003">Cell membrane</keyword>
<keyword id="KW-0472">Membrane</keyword>
<keyword id="KW-0812">Transmembrane</keyword>
<keyword id="KW-1133">Transmembrane helix</keyword>
<sequence length="177" mass="21379">MKQILNILPMFIFFIFYKFYDIFIASGSLIVISGLICIIHWILYNEIDKISLFSFLSVFFFGSLTIFFHNSQFIKWKITIIYIIFSLVLLISQFFTRKPMIQRFLEKDIKISNIYWRKINFIWSLFFLFCAILNIYIAYYFSETIWVNFKVFGFTSLTFFLILITSIYINCKISKNK</sequence>
<feature type="chain" id="PRO_1000124250" description="Inner membrane-spanning protein YciB">
    <location>
        <begin position="1"/>
        <end position="177"/>
    </location>
</feature>
<feature type="transmembrane region" description="Helical" evidence="1">
    <location>
        <begin position="22"/>
        <end position="42"/>
    </location>
</feature>
<feature type="transmembrane region" description="Helical" evidence="1">
    <location>
        <begin position="50"/>
        <end position="70"/>
    </location>
</feature>
<feature type="transmembrane region" description="Helical" evidence="1">
    <location>
        <begin position="76"/>
        <end position="96"/>
    </location>
</feature>
<feature type="transmembrane region" description="Helical" evidence="1">
    <location>
        <begin position="121"/>
        <end position="141"/>
    </location>
</feature>
<feature type="transmembrane region" description="Helical" evidence="1">
    <location>
        <begin position="149"/>
        <end position="169"/>
    </location>
</feature>
<accession>B8D968</accession>